<protein>
    <recommendedName>
        <fullName evidence="1">Threonine--tRNA ligase</fullName>
        <ecNumber evidence="1">6.1.1.3</ecNumber>
    </recommendedName>
    <alternativeName>
        <fullName evidence="1">Threonyl-tRNA synthetase</fullName>
        <shortName evidence="1">ThrRS</shortName>
    </alternativeName>
</protein>
<reference key="1">
    <citation type="journal article" date="2006" name="PLoS Genet.">
        <title>The complete genome sequence and comparative genome analysis of the high pathogenicity Yersinia enterocolitica strain 8081.</title>
        <authorList>
            <person name="Thomson N.R."/>
            <person name="Howard S."/>
            <person name="Wren B.W."/>
            <person name="Holden M.T.G."/>
            <person name="Crossman L."/>
            <person name="Challis G.L."/>
            <person name="Churcher C."/>
            <person name="Mungall K."/>
            <person name="Brooks K."/>
            <person name="Chillingworth T."/>
            <person name="Feltwell T."/>
            <person name="Abdellah Z."/>
            <person name="Hauser H."/>
            <person name="Jagels K."/>
            <person name="Maddison M."/>
            <person name="Moule S."/>
            <person name="Sanders M."/>
            <person name="Whitehead S."/>
            <person name="Quail M.A."/>
            <person name="Dougan G."/>
            <person name="Parkhill J."/>
            <person name="Prentice M.B."/>
        </authorList>
    </citation>
    <scope>NUCLEOTIDE SEQUENCE [LARGE SCALE GENOMIC DNA]</scope>
    <source>
        <strain>NCTC 13174 / 8081</strain>
    </source>
</reference>
<feature type="chain" id="PRO_1000020555" description="Threonine--tRNA ligase">
    <location>
        <begin position="1"/>
        <end position="642"/>
    </location>
</feature>
<feature type="domain" description="TGS" evidence="2">
    <location>
        <begin position="1"/>
        <end position="61"/>
    </location>
</feature>
<feature type="region of interest" description="Catalytic" evidence="1">
    <location>
        <begin position="243"/>
        <end position="534"/>
    </location>
</feature>
<feature type="binding site" evidence="1">
    <location>
        <position position="334"/>
    </location>
    <ligand>
        <name>Zn(2+)</name>
        <dbReference type="ChEBI" id="CHEBI:29105"/>
    </ligand>
</feature>
<feature type="binding site" evidence="1">
    <location>
        <position position="385"/>
    </location>
    <ligand>
        <name>Zn(2+)</name>
        <dbReference type="ChEBI" id="CHEBI:29105"/>
    </ligand>
</feature>
<feature type="binding site" evidence="1">
    <location>
        <position position="511"/>
    </location>
    <ligand>
        <name>Zn(2+)</name>
        <dbReference type="ChEBI" id="CHEBI:29105"/>
    </ligand>
</feature>
<name>SYT_YERE8</name>
<keyword id="KW-0030">Aminoacyl-tRNA synthetase</keyword>
<keyword id="KW-0067">ATP-binding</keyword>
<keyword id="KW-0963">Cytoplasm</keyword>
<keyword id="KW-0436">Ligase</keyword>
<keyword id="KW-0479">Metal-binding</keyword>
<keyword id="KW-0547">Nucleotide-binding</keyword>
<keyword id="KW-0648">Protein biosynthesis</keyword>
<keyword id="KW-0694">RNA-binding</keyword>
<keyword id="KW-0820">tRNA-binding</keyword>
<keyword id="KW-0862">Zinc</keyword>
<organism>
    <name type="scientific">Yersinia enterocolitica serotype O:8 / biotype 1B (strain NCTC 13174 / 8081)</name>
    <dbReference type="NCBI Taxonomy" id="393305"/>
    <lineage>
        <taxon>Bacteria</taxon>
        <taxon>Pseudomonadati</taxon>
        <taxon>Pseudomonadota</taxon>
        <taxon>Gammaproteobacteria</taxon>
        <taxon>Enterobacterales</taxon>
        <taxon>Yersiniaceae</taxon>
        <taxon>Yersinia</taxon>
    </lineage>
</organism>
<sequence>MPVITLPDGSQRQYDHAVSVLDVALDIGPGLAKACIAGRVNGELVDASDLIESDAQLAIITAKDAEGLEILRHSCAHLLGHAIKQLWPDTKMAIGPVIDNGFYYDVDINRTLTQEDLDLLEKRMHELADKDYDVIKKKVSWQEARDTFAARGEDYKVAILDENISRDDHPGLYHHEEYVDMCRGPHVPNMRFCHHFKLQKTSGAYWRGDSKNKMLQRIYGTAWSDKKQLNAYLQRLEEAAKRDHRKIGKQLDLYHMQEEAPGMVFWHNDGWTIFRELETFVRMKLKEYQYQEVKGPFMMDRVLWEKTGHWENYAEHMFTTSSENREYCIKPMNCPGHVQIFNQGLKSYRDLPLRMAEFGSCHRNEPSGALHGLMRVRGFTQDDAHIFCTEEQVRDEVNSCIKMVYDMYSTFGFEKIVVKLSTRPEKRIGSDDLWTRAEDDLAAALTENGIPFDYQPGEGAFYGPKIEFTLHDCLDRAWQCGTVQLDFSLPGRLSASYIGENNDRQVPVMIHRAILGSMERFIGILTEEYAGFFPTWLAPVQVVVMNITDSQSDYVQQVTKKLQDAGIRAKADLRNEKIGFKIREHTLRRVPYMLVCGDKEVESGKIAVRTRRGKDLGSLDVNVVVDQLLAEIRSRSLHQLEE</sequence>
<evidence type="ECO:0000255" key="1">
    <source>
        <dbReference type="HAMAP-Rule" id="MF_00184"/>
    </source>
</evidence>
<evidence type="ECO:0000255" key="2">
    <source>
        <dbReference type="PROSITE-ProRule" id="PRU01228"/>
    </source>
</evidence>
<comment type="function">
    <text evidence="1">Catalyzes the attachment of threonine to tRNA(Thr) in a two-step reaction: L-threonine is first activated by ATP to form Thr-AMP and then transferred to the acceptor end of tRNA(Thr). Also edits incorrectly charged L-seryl-tRNA(Thr).</text>
</comment>
<comment type="catalytic activity">
    <reaction evidence="1">
        <text>tRNA(Thr) + L-threonine + ATP = L-threonyl-tRNA(Thr) + AMP + diphosphate + H(+)</text>
        <dbReference type="Rhea" id="RHEA:24624"/>
        <dbReference type="Rhea" id="RHEA-COMP:9670"/>
        <dbReference type="Rhea" id="RHEA-COMP:9704"/>
        <dbReference type="ChEBI" id="CHEBI:15378"/>
        <dbReference type="ChEBI" id="CHEBI:30616"/>
        <dbReference type="ChEBI" id="CHEBI:33019"/>
        <dbReference type="ChEBI" id="CHEBI:57926"/>
        <dbReference type="ChEBI" id="CHEBI:78442"/>
        <dbReference type="ChEBI" id="CHEBI:78534"/>
        <dbReference type="ChEBI" id="CHEBI:456215"/>
        <dbReference type="EC" id="6.1.1.3"/>
    </reaction>
</comment>
<comment type="cofactor">
    <cofactor evidence="1">
        <name>Zn(2+)</name>
        <dbReference type="ChEBI" id="CHEBI:29105"/>
    </cofactor>
    <text evidence="1">Binds 1 zinc ion per subunit.</text>
</comment>
<comment type="subunit">
    <text evidence="1">Homodimer.</text>
</comment>
<comment type="subcellular location">
    <subcellularLocation>
        <location evidence="1">Cytoplasm</location>
    </subcellularLocation>
</comment>
<comment type="similarity">
    <text evidence="1">Belongs to the class-II aminoacyl-tRNA synthetase family.</text>
</comment>
<accession>A1JMJ9</accession>
<dbReference type="EC" id="6.1.1.3" evidence="1"/>
<dbReference type="EMBL" id="AM286415">
    <property type="protein sequence ID" value="CAL11992.1"/>
    <property type="molecule type" value="Genomic_DNA"/>
</dbReference>
<dbReference type="RefSeq" id="WP_011816225.1">
    <property type="nucleotide sequence ID" value="NC_008800.1"/>
</dbReference>
<dbReference type="RefSeq" id="YP_001006170.1">
    <property type="nucleotide sequence ID" value="NC_008800.1"/>
</dbReference>
<dbReference type="SMR" id="A1JMJ9"/>
<dbReference type="KEGG" id="yen:YE1912"/>
<dbReference type="PATRIC" id="fig|393305.7.peg.2066"/>
<dbReference type="eggNOG" id="COG0441">
    <property type="taxonomic scope" value="Bacteria"/>
</dbReference>
<dbReference type="HOGENOM" id="CLU_008554_0_1_6"/>
<dbReference type="OrthoDB" id="9802304at2"/>
<dbReference type="Proteomes" id="UP000000642">
    <property type="component" value="Chromosome"/>
</dbReference>
<dbReference type="GO" id="GO:0005829">
    <property type="term" value="C:cytosol"/>
    <property type="evidence" value="ECO:0007669"/>
    <property type="project" value="TreeGrafter"/>
</dbReference>
<dbReference type="GO" id="GO:0005524">
    <property type="term" value="F:ATP binding"/>
    <property type="evidence" value="ECO:0007669"/>
    <property type="project" value="UniProtKB-UniRule"/>
</dbReference>
<dbReference type="GO" id="GO:0046872">
    <property type="term" value="F:metal ion binding"/>
    <property type="evidence" value="ECO:0007669"/>
    <property type="project" value="UniProtKB-KW"/>
</dbReference>
<dbReference type="GO" id="GO:0004829">
    <property type="term" value="F:threonine-tRNA ligase activity"/>
    <property type="evidence" value="ECO:0007669"/>
    <property type="project" value="UniProtKB-UniRule"/>
</dbReference>
<dbReference type="GO" id="GO:0000049">
    <property type="term" value="F:tRNA binding"/>
    <property type="evidence" value="ECO:0007669"/>
    <property type="project" value="UniProtKB-KW"/>
</dbReference>
<dbReference type="GO" id="GO:0006435">
    <property type="term" value="P:threonyl-tRNA aminoacylation"/>
    <property type="evidence" value="ECO:0007669"/>
    <property type="project" value="UniProtKB-UniRule"/>
</dbReference>
<dbReference type="CDD" id="cd01667">
    <property type="entry name" value="TGS_ThrRS"/>
    <property type="match status" value="1"/>
</dbReference>
<dbReference type="CDD" id="cd00860">
    <property type="entry name" value="ThrRS_anticodon"/>
    <property type="match status" value="1"/>
</dbReference>
<dbReference type="CDD" id="cd00771">
    <property type="entry name" value="ThrRS_core"/>
    <property type="match status" value="1"/>
</dbReference>
<dbReference type="FunFam" id="3.10.20.30:FF:000005">
    <property type="entry name" value="Threonine--tRNA ligase"/>
    <property type="match status" value="1"/>
</dbReference>
<dbReference type="FunFam" id="3.30.54.20:FF:000002">
    <property type="entry name" value="Threonine--tRNA ligase"/>
    <property type="match status" value="1"/>
</dbReference>
<dbReference type="FunFam" id="3.30.930.10:FF:000002">
    <property type="entry name" value="Threonine--tRNA ligase"/>
    <property type="match status" value="1"/>
</dbReference>
<dbReference type="FunFam" id="3.40.50.800:FF:000001">
    <property type="entry name" value="Threonine--tRNA ligase"/>
    <property type="match status" value="1"/>
</dbReference>
<dbReference type="FunFam" id="3.30.980.10:FF:000005">
    <property type="entry name" value="Threonyl-tRNA synthetase, mitochondrial"/>
    <property type="match status" value="1"/>
</dbReference>
<dbReference type="Gene3D" id="3.10.20.30">
    <property type="match status" value="1"/>
</dbReference>
<dbReference type="Gene3D" id="3.30.54.20">
    <property type="match status" value="1"/>
</dbReference>
<dbReference type="Gene3D" id="3.40.50.800">
    <property type="entry name" value="Anticodon-binding domain"/>
    <property type="match status" value="1"/>
</dbReference>
<dbReference type="Gene3D" id="3.30.930.10">
    <property type="entry name" value="Bira Bifunctional Protein, Domain 2"/>
    <property type="match status" value="1"/>
</dbReference>
<dbReference type="Gene3D" id="3.30.980.10">
    <property type="entry name" value="Threonyl-trna Synthetase, Chain A, domain 2"/>
    <property type="match status" value="1"/>
</dbReference>
<dbReference type="HAMAP" id="MF_00184">
    <property type="entry name" value="Thr_tRNA_synth"/>
    <property type="match status" value="1"/>
</dbReference>
<dbReference type="InterPro" id="IPR002314">
    <property type="entry name" value="aa-tRNA-synt_IIb"/>
</dbReference>
<dbReference type="InterPro" id="IPR006195">
    <property type="entry name" value="aa-tRNA-synth_II"/>
</dbReference>
<dbReference type="InterPro" id="IPR045864">
    <property type="entry name" value="aa-tRNA-synth_II/BPL/LPL"/>
</dbReference>
<dbReference type="InterPro" id="IPR004154">
    <property type="entry name" value="Anticodon-bd"/>
</dbReference>
<dbReference type="InterPro" id="IPR036621">
    <property type="entry name" value="Anticodon-bd_dom_sf"/>
</dbReference>
<dbReference type="InterPro" id="IPR012675">
    <property type="entry name" value="Beta-grasp_dom_sf"/>
</dbReference>
<dbReference type="InterPro" id="IPR004095">
    <property type="entry name" value="TGS"/>
</dbReference>
<dbReference type="InterPro" id="IPR012676">
    <property type="entry name" value="TGS-like"/>
</dbReference>
<dbReference type="InterPro" id="IPR002320">
    <property type="entry name" value="Thr-tRNA-ligase_IIa"/>
</dbReference>
<dbReference type="InterPro" id="IPR018163">
    <property type="entry name" value="Thr/Ala-tRNA-synth_IIc_edit"/>
</dbReference>
<dbReference type="InterPro" id="IPR047246">
    <property type="entry name" value="ThrRS_anticodon"/>
</dbReference>
<dbReference type="InterPro" id="IPR033728">
    <property type="entry name" value="ThrRS_core"/>
</dbReference>
<dbReference type="InterPro" id="IPR012947">
    <property type="entry name" value="tRNA_SAD"/>
</dbReference>
<dbReference type="NCBIfam" id="TIGR00418">
    <property type="entry name" value="thrS"/>
    <property type="match status" value="1"/>
</dbReference>
<dbReference type="PANTHER" id="PTHR11451:SF44">
    <property type="entry name" value="THREONINE--TRNA LIGASE, CHLOROPLASTIC_MITOCHONDRIAL 2"/>
    <property type="match status" value="1"/>
</dbReference>
<dbReference type="PANTHER" id="PTHR11451">
    <property type="entry name" value="THREONINE-TRNA LIGASE"/>
    <property type="match status" value="1"/>
</dbReference>
<dbReference type="Pfam" id="PF03129">
    <property type="entry name" value="HGTP_anticodon"/>
    <property type="match status" value="1"/>
</dbReference>
<dbReference type="Pfam" id="PF02824">
    <property type="entry name" value="TGS"/>
    <property type="match status" value="1"/>
</dbReference>
<dbReference type="Pfam" id="PF00587">
    <property type="entry name" value="tRNA-synt_2b"/>
    <property type="match status" value="1"/>
</dbReference>
<dbReference type="Pfam" id="PF07973">
    <property type="entry name" value="tRNA_SAD"/>
    <property type="match status" value="1"/>
</dbReference>
<dbReference type="PRINTS" id="PR01047">
    <property type="entry name" value="TRNASYNTHTHR"/>
</dbReference>
<dbReference type="SMART" id="SM00863">
    <property type="entry name" value="tRNA_SAD"/>
    <property type="match status" value="1"/>
</dbReference>
<dbReference type="SUPFAM" id="SSF52954">
    <property type="entry name" value="Class II aaRS ABD-related"/>
    <property type="match status" value="1"/>
</dbReference>
<dbReference type="SUPFAM" id="SSF55681">
    <property type="entry name" value="Class II aaRS and biotin synthetases"/>
    <property type="match status" value="1"/>
</dbReference>
<dbReference type="SUPFAM" id="SSF81271">
    <property type="entry name" value="TGS-like"/>
    <property type="match status" value="1"/>
</dbReference>
<dbReference type="SUPFAM" id="SSF55186">
    <property type="entry name" value="ThrRS/AlaRS common domain"/>
    <property type="match status" value="1"/>
</dbReference>
<dbReference type="PROSITE" id="PS50862">
    <property type="entry name" value="AA_TRNA_LIGASE_II"/>
    <property type="match status" value="1"/>
</dbReference>
<dbReference type="PROSITE" id="PS51880">
    <property type="entry name" value="TGS"/>
    <property type="match status" value="1"/>
</dbReference>
<gene>
    <name evidence="1" type="primary">thrS</name>
    <name type="ordered locus">YE1912</name>
</gene>
<proteinExistence type="inferred from homology"/>